<protein>
    <recommendedName>
        <fullName>Taste receptor type 2 member 20</fullName>
    </recommendedName>
    <alternativeName>
        <fullName>Taste receptor type 2 member 49</fullName>
        <shortName>T2R49</shortName>
    </alternativeName>
</protein>
<name>T2R20_PANTR</name>
<gene>
    <name type="primary">TAS2R20</name>
    <name type="synonym">TAS2R49</name>
</gene>
<sequence>MMSFLHIVFSILVVVAFILGNFANGFIALINFIAWVKRQKISSADQIIAALAVSRVGLLWVILLHWYSTVLNPTSSNLKVIIFISNAWAVTNHFSIWLATSLSIFYLLKIVNFSRLIFHHLKRKAKSVVLVIVLGSLFFLVCXLVMKNTYINVWTEECEGNVTWKIKLRNAMHLSNLTVAMLANLIPFTLTLISFLLLIYSLCKHLKKMQLHGKGSQDPSTKIHIKALQTVTSFLILLAIYFLCLITSFWNSKMRPKEIVLMLCQAFGIIYPSFHSFILIWGNKTLKQTFLSVLWQVTCWAKGQNQSTP</sequence>
<organism>
    <name type="scientific">Pan troglodytes</name>
    <name type="common">Chimpanzee</name>
    <dbReference type="NCBI Taxonomy" id="9598"/>
    <lineage>
        <taxon>Eukaryota</taxon>
        <taxon>Metazoa</taxon>
        <taxon>Chordata</taxon>
        <taxon>Craniata</taxon>
        <taxon>Vertebrata</taxon>
        <taxon>Euteleostomi</taxon>
        <taxon>Mammalia</taxon>
        <taxon>Eutheria</taxon>
        <taxon>Euarchontoglires</taxon>
        <taxon>Primates</taxon>
        <taxon>Haplorrhini</taxon>
        <taxon>Catarrhini</taxon>
        <taxon>Hominidae</taxon>
        <taxon>Pan</taxon>
    </lineage>
</organism>
<evidence type="ECO:0000250" key="1"/>
<evidence type="ECO:0000255" key="2"/>
<evidence type="ECO:0000305" key="3"/>
<accession>Q646C2</accession>
<keyword id="KW-0297">G-protein coupled receptor</keyword>
<keyword id="KW-0472">Membrane</keyword>
<keyword id="KW-0675">Receptor</keyword>
<keyword id="KW-1185">Reference proteome</keyword>
<keyword id="KW-0716">Sensory transduction</keyword>
<keyword id="KW-0919">Taste</keyword>
<keyword id="KW-0807">Transducer</keyword>
<keyword id="KW-0812">Transmembrane</keyword>
<keyword id="KW-1133">Transmembrane helix</keyword>
<reference key="1">
    <citation type="journal article" date="2005" name="Mol. Biol. Evol.">
        <title>Evolution of bitter taste receptors in humans and apes.</title>
        <authorList>
            <person name="Fischer A."/>
            <person name="Gilad Y."/>
            <person name="Man O."/>
            <person name="Paeaebo S."/>
        </authorList>
    </citation>
    <scope>NUCLEOTIDE SEQUENCE [GENOMIC DNA]</scope>
</reference>
<comment type="function">
    <text evidence="1">Receptor that may play a role in the perception of bitterness and is gustducin-linked. May play a role in sensing the chemical composition of the gastrointestinal content. The activity of this receptor may stimulate alpha gustducin, mediate PLC-beta-2 activation and lead to the gating of TRPM5 (By similarity).</text>
</comment>
<comment type="subcellular location">
    <subcellularLocation>
        <location>Membrane</location>
        <topology>Multi-pass membrane protein</topology>
    </subcellularLocation>
</comment>
<comment type="miscellaneous">
    <text>Most taste cells may be activated by a limited number of bitter compounds; individual taste cells can discriminate among bitter stimuli.</text>
</comment>
<comment type="similarity">
    <text evidence="3">Belongs to the G-protein coupled receptor T2R family.</text>
</comment>
<feature type="chain" id="PRO_0000082333" description="Taste receptor type 2 member 20">
    <location>
        <begin position="1"/>
        <end position="309"/>
    </location>
</feature>
<feature type="topological domain" description="Extracellular" evidence="2">
    <location>
        <begin position="1"/>
        <end position="6"/>
    </location>
</feature>
<feature type="transmembrane region" description="Helical; Name=1" evidence="2">
    <location>
        <begin position="7"/>
        <end position="27"/>
    </location>
</feature>
<feature type="topological domain" description="Cytoplasmic" evidence="2">
    <location>
        <begin position="28"/>
        <end position="46"/>
    </location>
</feature>
<feature type="transmembrane region" description="Helical; Name=2" evidence="2">
    <location>
        <begin position="47"/>
        <end position="67"/>
    </location>
</feature>
<feature type="topological domain" description="Extracellular" evidence="2">
    <location>
        <begin position="68"/>
        <end position="79"/>
    </location>
</feature>
<feature type="transmembrane region" description="Helical; Name=3" evidence="2">
    <location>
        <begin position="80"/>
        <end position="100"/>
    </location>
</feature>
<feature type="topological domain" description="Cytoplasmic" evidence="2">
    <location>
        <begin position="101"/>
        <end position="125"/>
    </location>
</feature>
<feature type="transmembrane region" description="Helical; Name=4" evidence="2">
    <location>
        <begin position="126"/>
        <end position="146"/>
    </location>
</feature>
<feature type="topological domain" description="Extracellular" evidence="2">
    <location>
        <begin position="147"/>
        <end position="178"/>
    </location>
</feature>
<feature type="transmembrane region" description="Helical; Name=5" evidence="2">
    <location>
        <begin position="179"/>
        <end position="199"/>
    </location>
</feature>
<feature type="topological domain" description="Cytoplasmic" evidence="2">
    <location>
        <begin position="200"/>
        <end position="229"/>
    </location>
</feature>
<feature type="transmembrane region" description="Helical; Name=6" evidence="2">
    <location>
        <begin position="230"/>
        <end position="250"/>
    </location>
</feature>
<feature type="topological domain" description="Extracellular" evidence="2">
    <location>
        <begin position="251"/>
        <end position="259"/>
    </location>
</feature>
<feature type="transmembrane region" description="Helical; Name=7" evidence="2">
    <location>
        <begin position="260"/>
        <end position="280"/>
    </location>
</feature>
<feature type="topological domain" description="Cytoplasmic" evidence="2">
    <location>
        <begin position="281"/>
        <end position="309"/>
    </location>
</feature>
<proteinExistence type="inferred from homology"/>
<dbReference type="EMBL" id="AY724875">
    <property type="protein sequence ID" value="AAU21097.1"/>
    <property type="molecule type" value="Genomic_DNA"/>
</dbReference>
<dbReference type="RefSeq" id="NP_001009144.1">
    <property type="nucleotide sequence ID" value="NM_001009144.1"/>
</dbReference>
<dbReference type="FunCoup" id="Q646C2">
    <property type="interactions" value="204"/>
</dbReference>
<dbReference type="STRING" id="9598.ENSPTRP00000054718"/>
<dbReference type="PaxDb" id="9598-ENSPTRP00000054718"/>
<dbReference type="GeneID" id="493898"/>
<dbReference type="KEGG" id="ptr:493898"/>
<dbReference type="CTD" id="259295"/>
<dbReference type="eggNOG" id="ENOG502TE6U">
    <property type="taxonomic scope" value="Eukaryota"/>
</dbReference>
<dbReference type="InParanoid" id="Q646C2"/>
<dbReference type="OrthoDB" id="11181at9604"/>
<dbReference type="Proteomes" id="UP000002277">
    <property type="component" value="Unplaced"/>
</dbReference>
<dbReference type="GO" id="GO:0016020">
    <property type="term" value="C:membrane"/>
    <property type="evidence" value="ECO:0000318"/>
    <property type="project" value="GO_Central"/>
</dbReference>
<dbReference type="GO" id="GO:0005886">
    <property type="term" value="C:plasma membrane"/>
    <property type="evidence" value="ECO:0007669"/>
    <property type="project" value="UniProtKB-ARBA"/>
</dbReference>
<dbReference type="GO" id="GO:0033038">
    <property type="term" value="F:bitter taste receptor activity"/>
    <property type="evidence" value="ECO:0007669"/>
    <property type="project" value="InterPro"/>
</dbReference>
<dbReference type="GO" id="GO:0004930">
    <property type="term" value="F:G protein-coupled receptor activity"/>
    <property type="evidence" value="ECO:0007669"/>
    <property type="project" value="UniProtKB-KW"/>
</dbReference>
<dbReference type="CDD" id="cd15027">
    <property type="entry name" value="7tm_TAS2R43-like"/>
    <property type="match status" value="1"/>
</dbReference>
<dbReference type="FunFam" id="1.20.1070.10:FF:000042">
    <property type="entry name" value="Taste receptor type 2 member 7"/>
    <property type="match status" value="1"/>
</dbReference>
<dbReference type="Gene3D" id="1.20.1070.10">
    <property type="entry name" value="Rhodopsin 7-helix transmembrane proteins"/>
    <property type="match status" value="1"/>
</dbReference>
<dbReference type="InterPro" id="IPR007960">
    <property type="entry name" value="TAS2R"/>
</dbReference>
<dbReference type="PANTHER" id="PTHR11394">
    <property type="entry name" value="TASTE RECEPTOR TYPE 2"/>
    <property type="match status" value="1"/>
</dbReference>
<dbReference type="PANTHER" id="PTHR11394:SF27">
    <property type="entry name" value="TASTE RECEPTOR TYPE 2 MEMBER 20"/>
    <property type="match status" value="1"/>
</dbReference>
<dbReference type="Pfam" id="PF05296">
    <property type="entry name" value="TAS2R"/>
    <property type="match status" value="1"/>
</dbReference>
<dbReference type="SUPFAM" id="SSF81321">
    <property type="entry name" value="Family A G protein-coupled receptor-like"/>
    <property type="match status" value="1"/>
</dbReference>